<keyword id="KW-0002">3D-structure</keyword>
<keyword id="KW-0963">Cytoplasm</keyword>
<keyword id="KW-0903">Direct protein sequencing</keyword>
<keyword id="KW-0507">mRNA processing</keyword>
<keyword id="KW-0508">mRNA splicing</keyword>
<keyword id="KW-0539">Nucleus</keyword>
<keyword id="KW-1185">Reference proteome</keyword>
<keyword id="KW-0687">Ribonucleoprotein</keyword>
<keyword id="KW-0694">RNA-binding</keyword>
<name>SMD2_YEAST</name>
<accession>Q06217</accession>
<accession>D6VYS2</accession>
<feature type="chain" id="PRO_0000122213" description="Small nuclear ribonucleoprotein Sm D2">
    <location>
        <begin position="1"/>
        <end position="110"/>
    </location>
</feature>
<feature type="domain" description="Sm" evidence="2">
    <location>
        <begin position="31"/>
        <end position="110"/>
    </location>
</feature>
<feature type="helix" evidence="10">
    <location>
        <begin position="3"/>
        <end position="7"/>
    </location>
</feature>
<feature type="turn" evidence="10">
    <location>
        <begin position="10"/>
        <end position="12"/>
    </location>
</feature>
<feature type="helix" evidence="11">
    <location>
        <begin position="19"/>
        <end position="28"/>
    </location>
</feature>
<feature type="helix" evidence="11">
    <location>
        <begin position="32"/>
        <end position="40"/>
    </location>
</feature>
<feature type="strand" evidence="11">
    <location>
        <begin position="44"/>
        <end position="48"/>
    </location>
</feature>
<feature type="strand" evidence="11">
    <location>
        <begin position="53"/>
        <end position="61"/>
    </location>
</feature>
<feature type="strand" evidence="11">
    <location>
        <begin position="67"/>
        <end position="79"/>
    </location>
</feature>
<feature type="strand" evidence="9">
    <location>
        <begin position="80"/>
        <end position="82"/>
    </location>
</feature>
<feature type="strand" evidence="11">
    <location>
        <begin position="84"/>
        <end position="96"/>
    </location>
</feature>
<feature type="helix" evidence="11">
    <location>
        <begin position="98"/>
        <end position="100"/>
    </location>
</feature>
<feature type="strand" evidence="11">
    <location>
        <begin position="101"/>
        <end position="106"/>
    </location>
</feature>
<organism>
    <name type="scientific">Saccharomyces cerevisiae (strain ATCC 204508 / S288c)</name>
    <name type="common">Baker's yeast</name>
    <dbReference type="NCBI Taxonomy" id="559292"/>
    <lineage>
        <taxon>Eukaryota</taxon>
        <taxon>Fungi</taxon>
        <taxon>Dikarya</taxon>
        <taxon>Ascomycota</taxon>
        <taxon>Saccharomycotina</taxon>
        <taxon>Saccharomycetes</taxon>
        <taxon>Saccharomycetales</taxon>
        <taxon>Saccharomycetaceae</taxon>
        <taxon>Saccharomyces</taxon>
    </lineage>
</organism>
<protein>
    <recommendedName>
        <fullName>Small nuclear ribonucleoprotein Sm D2</fullName>
        <shortName>Sm-D2</shortName>
    </recommendedName>
    <alternativeName>
        <fullName>snRNP core protein D2</fullName>
    </alternativeName>
</protein>
<sequence length="110" mass="12853">MSSQIIDRPKHELSRAELEELEEFEFKHGPMSLINDAMVTRTPVIISLRNNHKIIARVKAFDRHCNMVLENVKELWTEKKGKNVINRERFISKLFLRGDSVIVVLKTPVE</sequence>
<dbReference type="EMBL" id="U17245">
    <property type="protein sequence ID" value="AAB67368.1"/>
    <property type="molecule type" value="Genomic_DNA"/>
</dbReference>
<dbReference type="EMBL" id="BK006945">
    <property type="protein sequence ID" value="DAA09588.1"/>
    <property type="molecule type" value="Genomic_DNA"/>
</dbReference>
<dbReference type="PIR" id="S69326">
    <property type="entry name" value="S69326"/>
</dbReference>
<dbReference type="RefSeq" id="NP_013377.1">
    <property type="nucleotide sequence ID" value="NM_001182162.1"/>
</dbReference>
<dbReference type="PDB" id="3JCM">
    <property type="method" value="EM"/>
    <property type="resolution" value="3.80 A"/>
    <property type="chains" value="Q/U=1-110"/>
</dbReference>
<dbReference type="PDB" id="5GAM">
    <property type="method" value="EM"/>
    <property type="resolution" value="3.70 A"/>
    <property type="chains" value="j=1-110"/>
</dbReference>
<dbReference type="PDB" id="5GAN">
    <property type="method" value="EM"/>
    <property type="resolution" value="3.60 A"/>
    <property type="chains" value="j/m=1-110"/>
</dbReference>
<dbReference type="PDB" id="5GAO">
    <property type="method" value="EM"/>
    <property type="resolution" value="3.60 A"/>
    <property type="chains" value="m=1-110"/>
</dbReference>
<dbReference type="PDB" id="5GM6">
    <property type="method" value="EM"/>
    <property type="resolution" value="3.50 A"/>
    <property type="chains" value="g=15-108"/>
</dbReference>
<dbReference type="PDB" id="5GMK">
    <property type="method" value="EM"/>
    <property type="resolution" value="3.40 A"/>
    <property type="chains" value="e/g=1-110"/>
</dbReference>
<dbReference type="PDB" id="5LJ3">
    <property type="method" value="EM"/>
    <property type="resolution" value="3.80 A"/>
    <property type="chains" value="j/m=1-110"/>
</dbReference>
<dbReference type="PDB" id="5LJ5">
    <property type="method" value="EM"/>
    <property type="resolution" value="3.80 A"/>
    <property type="chains" value="j/m=1-110"/>
</dbReference>
<dbReference type="PDB" id="5LQW">
    <property type="method" value="EM"/>
    <property type="resolution" value="5.80 A"/>
    <property type="chains" value="j=1-110"/>
</dbReference>
<dbReference type="PDB" id="5MPS">
    <property type="method" value="EM"/>
    <property type="resolution" value="3.85 A"/>
    <property type="chains" value="j=1-110"/>
</dbReference>
<dbReference type="PDB" id="5MQ0">
    <property type="method" value="EM"/>
    <property type="resolution" value="4.17 A"/>
    <property type="chains" value="j/m=1-110"/>
</dbReference>
<dbReference type="PDB" id="5NRL">
    <property type="method" value="EM"/>
    <property type="resolution" value="7.20 A"/>
    <property type="chains" value="i/m/u=1-110"/>
</dbReference>
<dbReference type="PDB" id="5WSG">
    <property type="method" value="EM"/>
    <property type="resolution" value="4.00 A"/>
    <property type="chains" value="W/g=1-110"/>
</dbReference>
<dbReference type="PDB" id="5Y88">
    <property type="method" value="EM"/>
    <property type="resolution" value="3.70 A"/>
    <property type="chains" value="g/n=1-110"/>
</dbReference>
<dbReference type="PDB" id="5YLZ">
    <property type="method" value="EM"/>
    <property type="resolution" value="3.60 A"/>
    <property type="chains" value="g/n=1-110"/>
</dbReference>
<dbReference type="PDB" id="5ZWM">
    <property type="method" value="EM"/>
    <property type="resolution" value="3.40 A"/>
    <property type="chains" value="R/c/n=1-110"/>
</dbReference>
<dbReference type="PDB" id="5ZWN">
    <property type="method" value="EM"/>
    <property type="resolution" value="3.30 A"/>
    <property type="chains" value="c=1-110"/>
</dbReference>
<dbReference type="PDB" id="5ZWO">
    <property type="method" value="EM"/>
    <property type="resolution" value="3.90 A"/>
    <property type="chains" value="R/c/n=1-110"/>
</dbReference>
<dbReference type="PDB" id="6BK8">
    <property type="method" value="EM"/>
    <property type="resolution" value="3.30 A"/>
    <property type="chains" value="a/q=1-110"/>
</dbReference>
<dbReference type="PDB" id="6EXN">
    <property type="method" value="EM"/>
    <property type="resolution" value="3.70 A"/>
    <property type="chains" value="j/m=1-110"/>
</dbReference>
<dbReference type="PDB" id="6G90">
    <property type="method" value="EM"/>
    <property type="resolution" value="4.00 A"/>
    <property type="chains" value="i/u=1-110"/>
</dbReference>
<dbReference type="PDB" id="6J6G">
    <property type="method" value="EM"/>
    <property type="resolution" value="3.20 A"/>
    <property type="chains" value="e/g=1-110"/>
</dbReference>
<dbReference type="PDB" id="6J6H">
    <property type="method" value="EM"/>
    <property type="resolution" value="3.60 A"/>
    <property type="chains" value="e/g=1-110"/>
</dbReference>
<dbReference type="PDB" id="6J6N">
    <property type="method" value="EM"/>
    <property type="resolution" value="3.86 A"/>
    <property type="chains" value="e/g=1-110"/>
</dbReference>
<dbReference type="PDB" id="6J6Q">
    <property type="method" value="EM"/>
    <property type="resolution" value="3.70 A"/>
    <property type="chains" value="e/g=1-110"/>
</dbReference>
<dbReference type="PDB" id="6N7P">
    <property type="method" value="EM"/>
    <property type="resolution" value="3.60 A"/>
    <property type="chains" value="M=1-110"/>
</dbReference>
<dbReference type="PDB" id="6N7R">
    <property type="method" value="EM"/>
    <property type="resolution" value="3.20 A"/>
    <property type="chains" value="M=1-110"/>
</dbReference>
<dbReference type="PDB" id="6N7X">
    <property type="method" value="EM"/>
    <property type="resolution" value="3.60 A"/>
    <property type="chains" value="M=1-110"/>
</dbReference>
<dbReference type="PDB" id="7B9V">
    <property type="method" value="EM"/>
    <property type="resolution" value="2.80 A"/>
    <property type="chains" value="j/m=1-110"/>
</dbReference>
<dbReference type="PDB" id="7OQB">
    <property type="method" value="EM"/>
    <property type="resolution" value="9.00 A"/>
    <property type="chains" value="u=1-110"/>
</dbReference>
<dbReference type="PDB" id="7OQC">
    <property type="method" value="EM"/>
    <property type="resolution" value="4.10 A"/>
    <property type="chains" value="i=1-110"/>
</dbReference>
<dbReference type="PDB" id="7OQE">
    <property type="method" value="EM"/>
    <property type="resolution" value="5.90 A"/>
    <property type="chains" value="i/u=1-110"/>
</dbReference>
<dbReference type="PDB" id="8W2O">
    <property type="method" value="EM"/>
    <property type="resolution" value="3.49 A"/>
    <property type="chains" value="M=1-110"/>
</dbReference>
<dbReference type="PDB" id="9DTR">
    <property type="method" value="EM"/>
    <property type="resolution" value="2.31 A"/>
    <property type="chains" value="j/m=1-110"/>
</dbReference>
<dbReference type="PDBsum" id="3JCM"/>
<dbReference type="PDBsum" id="5GAM"/>
<dbReference type="PDBsum" id="5GAN"/>
<dbReference type="PDBsum" id="5GAO"/>
<dbReference type="PDBsum" id="5GM6"/>
<dbReference type="PDBsum" id="5GMK"/>
<dbReference type="PDBsum" id="5LJ3"/>
<dbReference type="PDBsum" id="5LJ5"/>
<dbReference type="PDBsum" id="5LQW"/>
<dbReference type="PDBsum" id="5MPS"/>
<dbReference type="PDBsum" id="5MQ0"/>
<dbReference type="PDBsum" id="5NRL"/>
<dbReference type="PDBsum" id="5WSG"/>
<dbReference type="PDBsum" id="5Y88"/>
<dbReference type="PDBsum" id="5YLZ"/>
<dbReference type="PDBsum" id="5ZWM"/>
<dbReference type="PDBsum" id="5ZWN"/>
<dbReference type="PDBsum" id="5ZWO"/>
<dbReference type="PDBsum" id="6BK8"/>
<dbReference type="PDBsum" id="6EXN"/>
<dbReference type="PDBsum" id="6G90"/>
<dbReference type="PDBsum" id="6J6G"/>
<dbReference type="PDBsum" id="6J6H"/>
<dbReference type="PDBsum" id="6J6N"/>
<dbReference type="PDBsum" id="6J6Q"/>
<dbReference type="PDBsum" id="6N7P"/>
<dbReference type="PDBsum" id="6N7R"/>
<dbReference type="PDBsum" id="6N7X"/>
<dbReference type="PDBsum" id="7B9V"/>
<dbReference type="PDBsum" id="7OQB"/>
<dbReference type="PDBsum" id="7OQC"/>
<dbReference type="PDBsum" id="7OQE"/>
<dbReference type="PDBsum" id="8W2O"/>
<dbReference type="PDBsum" id="9DTR"/>
<dbReference type="EMDB" id="EMD-0360"/>
<dbReference type="EMDB" id="EMD-0361"/>
<dbReference type="EMDB" id="EMD-0686"/>
<dbReference type="EMDB" id="EMD-0687"/>
<dbReference type="EMDB" id="EMD-0691"/>
<dbReference type="EMDB" id="EMD-0692"/>
<dbReference type="EMDB" id="EMD-12106"/>
<dbReference type="EMDB" id="EMD-13028"/>
<dbReference type="EMDB" id="EMD-13029"/>
<dbReference type="EMDB" id="EMD-13033"/>
<dbReference type="EMDB" id="EMD-3539"/>
<dbReference type="EMDB" id="EMD-3541"/>
<dbReference type="EMDB" id="EMD-3683"/>
<dbReference type="EMDB" id="EMD-3979"/>
<dbReference type="EMDB" id="EMD-4055"/>
<dbReference type="EMDB" id="EMD-4057"/>
<dbReference type="EMDB" id="EMD-4364"/>
<dbReference type="EMDB" id="EMD-43753"/>
<dbReference type="EMDB" id="EMD-47157"/>
<dbReference type="EMDB" id="EMD-6817"/>
<dbReference type="EMDB" id="EMD-6839"/>
<dbReference type="EMDB" id="EMD-6972"/>
<dbReference type="EMDB" id="EMD-6973"/>
<dbReference type="EMDB" id="EMD-6974"/>
<dbReference type="EMDB" id="EMD-7109"/>
<dbReference type="EMDB" id="EMD-8011"/>
<dbReference type="EMDB" id="EMD-8012"/>
<dbReference type="EMDB" id="EMD-8013"/>
<dbReference type="EMDB" id="EMD-8622"/>
<dbReference type="EMDB" id="EMD-9524"/>
<dbReference type="EMDB" id="EMD-9525"/>
<dbReference type="SMR" id="Q06217"/>
<dbReference type="BioGRID" id="31543">
    <property type="interactions" value="752"/>
</dbReference>
<dbReference type="ComplexPortal" id="CPX-1651">
    <property type="entry name" value="PRP19-associated complex"/>
</dbReference>
<dbReference type="ComplexPortal" id="CPX-23">
    <property type="entry name" value="U1 small nuclear ribonucleoprotein complex"/>
</dbReference>
<dbReference type="ComplexPortal" id="CPX-25">
    <property type="entry name" value="U4/U6.U5 tri-small nuclear ribonucleoprotein complex"/>
</dbReference>
<dbReference type="ComplexPortal" id="CPX-26">
    <property type="entry name" value="U2 small nuclear ribonucleoprotein complex"/>
</dbReference>
<dbReference type="ComplexPortal" id="CPX-29">
    <property type="entry name" value="U5 small nuclear ribonucleoprotein complex"/>
</dbReference>
<dbReference type="ComplexPortal" id="CPX-30">
    <property type="entry name" value="U5 small nuclear ribonucleoprotein complex, AAR2 variant"/>
</dbReference>
<dbReference type="ComplexPortal" id="CPX-31">
    <property type="entry name" value="U4 small nuclear ribonucleoprotein complex"/>
</dbReference>
<dbReference type="ComplexPortal" id="CPX-32">
    <property type="entry name" value="U4/U6 small nuclear ribonucleoprotein complex"/>
</dbReference>
<dbReference type="ComplexPortal" id="CPX-43">
    <property type="entry name" value="Sm complex"/>
</dbReference>
<dbReference type="DIP" id="DIP-1421N"/>
<dbReference type="FunCoup" id="Q06217">
    <property type="interactions" value="1451"/>
</dbReference>
<dbReference type="IntAct" id="Q06217">
    <property type="interactions" value="76"/>
</dbReference>
<dbReference type="MINT" id="Q06217"/>
<dbReference type="STRING" id="4932.YLR275W"/>
<dbReference type="iPTMnet" id="Q06217"/>
<dbReference type="PaxDb" id="4932-YLR275W"/>
<dbReference type="PeptideAtlas" id="Q06217"/>
<dbReference type="EnsemblFungi" id="YLR275W_mRNA">
    <property type="protein sequence ID" value="YLR275W"/>
    <property type="gene ID" value="YLR275W"/>
</dbReference>
<dbReference type="GeneID" id="850981"/>
<dbReference type="KEGG" id="sce:YLR275W"/>
<dbReference type="AGR" id="SGD:S000004265"/>
<dbReference type="SGD" id="S000004265">
    <property type="gene designation" value="SMD2"/>
</dbReference>
<dbReference type="VEuPathDB" id="FungiDB:YLR275W"/>
<dbReference type="eggNOG" id="KOG3459">
    <property type="taxonomic scope" value="Eukaryota"/>
</dbReference>
<dbReference type="GeneTree" id="ENSGT00390000017608"/>
<dbReference type="HOGENOM" id="CLU_076902_2_1_1"/>
<dbReference type="InParanoid" id="Q06217"/>
<dbReference type="OMA" id="DVKEMWT"/>
<dbReference type="OrthoDB" id="437526at2759"/>
<dbReference type="BioCyc" id="YEAST:G3O-32374-MONOMER"/>
<dbReference type="BioGRID-ORCS" id="850981">
    <property type="hits" value="0 hits in 10 CRISPR screens"/>
</dbReference>
<dbReference type="EvolutionaryTrace" id="Q06217"/>
<dbReference type="PRO" id="PR:Q06217"/>
<dbReference type="Proteomes" id="UP000002311">
    <property type="component" value="Chromosome XII"/>
</dbReference>
<dbReference type="RNAct" id="Q06217">
    <property type="molecule type" value="protein"/>
</dbReference>
<dbReference type="GO" id="GO:0071013">
    <property type="term" value="C:catalytic step 2 spliceosome"/>
    <property type="evidence" value="ECO:0000318"/>
    <property type="project" value="GO_Central"/>
</dbReference>
<dbReference type="GO" id="GO:0000243">
    <property type="term" value="C:commitment complex"/>
    <property type="evidence" value="ECO:0000303"/>
    <property type="project" value="ComplexPortal"/>
</dbReference>
<dbReference type="GO" id="GO:0005737">
    <property type="term" value="C:cytoplasm"/>
    <property type="evidence" value="ECO:0000303"/>
    <property type="project" value="ComplexPortal"/>
</dbReference>
<dbReference type="GO" id="GO:0005829">
    <property type="term" value="C:cytosol"/>
    <property type="evidence" value="ECO:0007669"/>
    <property type="project" value="UniProtKB-SubCell"/>
</dbReference>
<dbReference type="GO" id="GO:0005634">
    <property type="term" value="C:nucleus"/>
    <property type="evidence" value="ECO:0000303"/>
    <property type="project" value="ComplexPortal"/>
</dbReference>
<dbReference type="GO" id="GO:0034715">
    <property type="term" value="C:pICln-Sm protein complex"/>
    <property type="evidence" value="ECO:0000318"/>
    <property type="project" value="GO_Central"/>
</dbReference>
<dbReference type="GO" id="GO:0071011">
    <property type="term" value="C:precatalytic spliceosome"/>
    <property type="evidence" value="ECO:0000318"/>
    <property type="project" value="GO_Central"/>
</dbReference>
<dbReference type="GO" id="GO:0000974">
    <property type="term" value="C:Prp19 complex"/>
    <property type="evidence" value="ECO:0000353"/>
    <property type="project" value="ComplexPortal"/>
</dbReference>
<dbReference type="GO" id="GO:0005681">
    <property type="term" value="C:spliceosomal complex"/>
    <property type="evidence" value="ECO:0000303"/>
    <property type="project" value="ComplexPortal"/>
</dbReference>
<dbReference type="GO" id="GO:0005685">
    <property type="term" value="C:U1 snRNP"/>
    <property type="evidence" value="ECO:0000314"/>
    <property type="project" value="SGD"/>
</dbReference>
<dbReference type="GO" id="GO:0005686">
    <property type="term" value="C:U2 snRNP"/>
    <property type="evidence" value="ECO:0000318"/>
    <property type="project" value="GO_Central"/>
</dbReference>
<dbReference type="GO" id="GO:0071004">
    <property type="term" value="C:U2-type prespliceosome"/>
    <property type="evidence" value="ECO:0000314"/>
    <property type="project" value="SGD"/>
</dbReference>
<dbReference type="GO" id="GO:0005687">
    <property type="term" value="C:U4 snRNP"/>
    <property type="evidence" value="ECO:0000353"/>
    <property type="project" value="ComplexPortal"/>
</dbReference>
<dbReference type="GO" id="GO:0071001">
    <property type="term" value="C:U4/U6 snRNP"/>
    <property type="evidence" value="ECO:0000303"/>
    <property type="project" value="ComplexPortal"/>
</dbReference>
<dbReference type="GO" id="GO:0046540">
    <property type="term" value="C:U4/U6 x U5 tri-snRNP complex"/>
    <property type="evidence" value="ECO:0000314"/>
    <property type="project" value="SGD"/>
</dbReference>
<dbReference type="GO" id="GO:0005682">
    <property type="term" value="C:U5 snRNP"/>
    <property type="evidence" value="ECO:0000314"/>
    <property type="project" value="SGD"/>
</dbReference>
<dbReference type="GO" id="GO:0003723">
    <property type="term" value="F:RNA binding"/>
    <property type="evidence" value="ECO:0007669"/>
    <property type="project" value="UniProtKB-KW"/>
</dbReference>
<dbReference type="GO" id="GO:0036261">
    <property type="term" value="P:7-methylguanosine cap hypermethylation"/>
    <property type="evidence" value="ECO:0000315"/>
    <property type="project" value="ComplexPortal"/>
</dbReference>
<dbReference type="GO" id="GO:0000395">
    <property type="term" value="P:mRNA 5'-splice site recognition"/>
    <property type="evidence" value="ECO:0000303"/>
    <property type="project" value="ComplexPortal"/>
</dbReference>
<dbReference type="GO" id="GO:0000398">
    <property type="term" value="P:mRNA splicing, via spliceosome"/>
    <property type="evidence" value="ECO:0000353"/>
    <property type="project" value="ComplexPortal"/>
</dbReference>
<dbReference type="GO" id="GO:0000245">
    <property type="term" value="P:spliceosomal complex assembly"/>
    <property type="evidence" value="ECO:0000303"/>
    <property type="project" value="ComplexPortal"/>
</dbReference>
<dbReference type="GO" id="GO:0000387">
    <property type="term" value="P:spliceosomal snRNP assembly"/>
    <property type="evidence" value="ECO:0000318"/>
    <property type="project" value="GO_Central"/>
</dbReference>
<dbReference type="GO" id="GO:1903241">
    <property type="term" value="P:U2-type prespliceosome assembly"/>
    <property type="evidence" value="ECO:0000303"/>
    <property type="project" value="ComplexPortal"/>
</dbReference>
<dbReference type="CDD" id="cd01720">
    <property type="entry name" value="Sm_D2"/>
    <property type="match status" value="1"/>
</dbReference>
<dbReference type="FunFam" id="2.30.30.100:FF:000018">
    <property type="entry name" value="Small nuclear ribonucleoprotein Sm D2"/>
    <property type="match status" value="1"/>
</dbReference>
<dbReference type="Gene3D" id="2.30.30.100">
    <property type="match status" value="1"/>
</dbReference>
<dbReference type="InterPro" id="IPR010920">
    <property type="entry name" value="LSM_dom_sf"/>
</dbReference>
<dbReference type="InterPro" id="IPR047575">
    <property type="entry name" value="Sm"/>
</dbReference>
<dbReference type="InterPro" id="IPR027248">
    <property type="entry name" value="Sm_D2"/>
</dbReference>
<dbReference type="InterPro" id="IPR001163">
    <property type="entry name" value="Sm_dom_euk/arc"/>
</dbReference>
<dbReference type="PANTHER" id="PTHR12777">
    <property type="entry name" value="SMALL NUCLEAR RIBONUCLEOPROTEIN SM D2"/>
    <property type="match status" value="1"/>
</dbReference>
<dbReference type="Pfam" id="PF01423">
    <property type="entry name" value="LSM"/>
    <property type="match status" value="1"/>
</dbReference>
<dbReference type="SMART" id="SM00651">
    <property type="entry name" value="Sm"/>
    <property type="match status" value="1"/>
</dbReference>
<dbReference type="SUPFAM" id="SSF50182">
    <property type="entry name" value="Sm-like ribonucleoproteins"/>
    <property type="match status" value="1"/>
</dbReference>
<dbReference type="PROSITE" id="PS52002">
    <property type="entry name" value="SM"/>
    <property type="match status" value="1"/>
</dbReference>
<reference key="1">
    <citation type="journal article" date="1998" name="Mol. Cell. Biol.">
        <title>Interactions within the yeast Sm core complex: from proteins to amino acids.</title>
        <authorList>
            <person name="Camasses A."/>
            <person name="Bragado-Nilsson E."/>
            <person name="Martin R."/>
            <person name="Seraphin B."/>
            <person name="Bordonne R."/>
        </authorList>
    </citation>
    <scope>NUCLEOTIDE SEQUENCE [GENOMIC DNA]</scope>
</reference>
<reference key="2">
    <citation type="journal article" date="1999" name="EMBO J.">
        <title>Sm and Sm-like proteins assemble in two related complexes of deep evolutionary origin.</title>
        <authorList>
            <person name="Salgado-Garrido J."/>
            <person name="Bragado-Nilsson E."/>
            <person name="Kandels-Lewis S."/>
            <person name="Seraphin B."/>
        </authorList>
    </citation>
    <scope>NUCLEOTIDE SEQUENCE [GENOMIC DNA]</scope>
    <scope>RNA-BINDING</scope>
</reference>
<reference key="3">
    <citation type="journal article" date="1997" name="Nature">
        <title>The nucleotide sequence of Saccharomyces cerevisiae chromosome XII.</title>
        <authorList>
            <person name="Johnston M."/>
            <person name="Hillier L.W."/>
            <person name="Riles L."/>
            <person name="Albermann K."/>
            <person name="Andre B."/>
            <person name="Ansorge W."/>
            <person name="Benes V."/>
            <person name="Brueckner M."/>
            <person name="Delius H."/>
            <person name="Dubois E."/>
            <person name="Duesterhoeft A."/>
            <person name="Entian K.-D."/>
            <person name="Floeth M."/>
            <person name="Goffeau A."/>
            <person name="Hebling U."/>
            <person name="Heumann K."/>
            <person name="Heuss-Neitzel D."/>
            <person name="Hilbert H."/>
            <person name="Hilger F."/>
            <person name="Kleine K."/>
            <person name="Koetter P."/>
            <person name="Louis E.J."/>
            <person name="Messenguy F."/>
            <person name="Mewes H.-W."/>
            <person name="Miosga T."/>
            <person name="Moestl D."/>
            <person name="Mueller-Auer S."/>
            <person name="Nentwich U."/>
            <person name="Obermaier B."/>
            <person name="Piravandi E."/>
            <person name="Pohl T.M."/>
            <person name="Portetelle D."/>
            <person name="Purnelle B."/>
            <person name="Rechmann S."/>
            <person name="Rieger M."/>
            <person name="Rinke M."/>
            <person name="Rose M."/>
            <person name="Scharfe M."/>
            <person name="Scherens B."/>
            <person name="Scholler P."/>
            <person name="Schwager C."/>
            <person name="Schwarz S."/>
            <person name="Underwood A.P."/>
            <person name="Urrestarazu L.A."/>
            <person name="Vandenbol M."/>
            <person name="Verhasselt P."/>
            <person name="Vierendeels F."/>
            <person name="Voet M."/>
            <person name="Volckaert G."/>
            <person name="Voss H."/>
            <person name="Wambutt R."/>
            <person name="Wedler E."/>
            <person name="Wedler H."/>
            <person name="Zimmermann F.K."/>
            <person name="Zollner A."/>
            <person name="Hani J."/>
            <person name="Hoheisel J.D."/>
        </authorList>
    </citation>
    <scope>NUCLEOTIDE SEQUENCE [LARGE SCALE GENOMIC DNA]</scope>
    <source>
        <strain>ATCC 204508 / S288c</strain>
    </source>
</reference>
<reference key="4">
    <citation type="submission" date="1997-08" db="EMBL/GenBank/DDBJ databases">
        <authorList>
            <person name="Cherry J.M."/>
        </authorList>
    </citation>
    <scope>SEQUENCE REVISION</scope>
</reference>
<reference key="5">
    <citation type="journal article" date="2014" name="G3 (Bethesda)">
        <title>The reference genome sequence of Saccharomyces cerevisiae: Then and now.</title>
        <authorList>
            <person name="Engel S.R."/>
            <person name="Dietrich F.S."/>
            <person name="Fisk D.G."/>
            <person name="Binkley G."/>
            <person name="Balakrishnan R."/>
            <person name="Costanzo M.C."/>
            <person name="Dwight S.S."/>
            <person name="Hitz B.C."/>
            <person name="Karra K."/>
            <person name="Nash R.S."/>
            <person name="Weng S."/>
            <person name="Wong E.D."/>
            <person name="Lloyd P."/>
            <person name="Skrzypek M.S."/>
            <person name="Miyasato S.R."/>
            <person name="Simison M."/>
            <person name="Cherry J.M."/>
        </authorList>
    </citation>
    <scope>GENOME REANNOTATION</scope>
    <source>
        <strain>ATCC 204508 / S288c</strain>
    </source>
</reference>
<reference key="6">
    <citation type="journal article" date="1997" name="Proc. Natl. Acad. Sci. U.S.A.">
        <title>Identification of the proteins of the yeast U1 small nuclear ribonucleoprotein complex by mass spectrometry.</title>
        <authorList>
            <person name="Neubauer G."/>
            <person name="Gottschalk A."/>
            <person name="Fabrizio P."/>
            <person name="Seraphin B."/>
            <person name="Luehrmann R."/>
            <person name="Mann M."/>
        </authorList>
    </citation>
    <scope>PARTIAL PROTEIN SEQUENCE</scope>
    <scope>IDENTIFICATION</scope>
</reference>
<reference key="7">
    <citation type="journal article" date="1999" name="EMBO J.">
        <title>Identification by mass spectrometry and functional analysis of novel proteins of the yeast [U4/U6.U5] tri-snRNP.</title>
        <authorList>
            <person name="Gottschalk A."/>
            <person name="Neubauer G."/>
            <person name="Banroques J."/>
            <person name="Mann M."/>
            <person name="Luehrmann R."/>
            <person name="Fabrizio P."/>
        </authorList>
    </citation>
    <scope>SUBUNIT</scope>
    <scope>IDENTIFICATION IN THE U4/U5/U6 TRI-SNRNP COMPLEX</scope>
    <scope>IDENTIFICATION BY MASS SPECTROMETRY</scope>
</reference>
<reference key="8">
    <citation type="journal article" date="2001" name="J. Mol. Biol.">
        <title>Stoichiometry of the Sm proteins in yeast spliceosomal snRNPs supports the heptamer ring model of the core domain.</title>
        <authorList>
            <person name="Walke S."/>
            <person name="Bragado-Nilsson E."/>
            <person name="Seraphin B."/>
            <person name="Nagai K."/>
        </authorList>
    </citation>
    <scope>SUBUNIT</scope>
</reference>
<reference key="9">
    <citation type="journal article" date="2002" name="Mol. Cell">
        <title>Composition and functional characterization of the yeast spliceosomal penta-snRNP.</title>
        <authorList>
            <person name="Stevens S.W."/>
            <person name="Ryan D.E."/>
            <person name="Ge H.Y."/>
            <person name="Moore R.E."/>
            <person name="Young M.K."/>
            <person name="Lee T.D."/>
            <person name="Abelson J."/>
        </authorList>
    </citation>
    <scope>CHARACTERIZATION OF THE SPLICEOSOME</scope>
</reference>
<reference key="10">
    <citation type="journal article" date="2003" name="Nature">
        <title>Global analysis of protein expression in yeast.</title>
        <authorList>
            <person name="Ghaemmaghami S."/>
            <person name="Huh W.-K."/>
            <person name="Bower K."/>
            <person name="Howson R.W."/>
            <person name="Belle A."/>
            <person name="Dephoure N."/>
            <person name="O'Shea E.K."/>
            <person name="Weissman J.S."/>
        </authorList>
    </citation>
    <scope>LEVEL OF PROTEIN EXPRESSION [LARGE SCALE ANALYSIS]</scope>
</reference>
<reference key="11">
    <citation type="journal article" date="2002" name="Mol. Cell. Biol.">
        <title>Proteomics analysis reveals stable multiprotein complexes in both fission and budding yeasts containing Myb-related Cdc5p/Cef1p, novel pre-mRNA splicing factors, and snRNAs.</title>
        <authorList>
            <person name="Ohi M.D."/>
            <person name="Link A.J."/>
            <person name="Ren L."/>
            <person name="Jennings J.L."/>
            <person name="McDonald W.H."/>
            <person name="Gould K.L."/>
        </authorList>
    </citation>
    <scope>IDENTIFICATION IN THE CWC COMPLEX</scope>
    <scope>IDENTIFICATION BY MASS SPECTROMETRY</scope>
</reference>
<evidence type="ECO:0000250" key="1">
    <source>
        <dbReference type="UniProtKB" id="P62316"/>
    </source>
</evidence>
<evidence type="ECO:0000255" key="2">
    <source>
        <dbReference type="PROSITE-ProRule" id="PRU01346"/>
    </source>
</evidence>
<evidence type="ECO:0000269" key="3">
    <source>
    </source>
</evidence>
<evidence type="ECO:0000269" key="4">
    <source>
    </source>
</evidence>
<evidence type="ECO:0000269" key="5">
    <source>
    </source>
</evidence>
<evidence type="ECO:0000269" key="6">
    <source>
    </source>
</evidence>
<evidence type="ECO:0000269" key="7">
    <source>
    </source>
</evidence>
<evidence type="ECO:0000305" key="8"/>
<evidence type="ECO:0007829" key="9">
    <source>
        <dbReference type="PDB" id="6BK8"/>
    </source>
</evidence>
<evidence type="ECO:0007829" key="10">
    <source>
        <dbReference type="PDB" id="6N7R"/>
    </source>
</evidence>
<evidence type="ECO:0007829" key="11">
    <source>
        <dbReference type="PDB" id="9DTR"/>
    </source>
</evidence>
<gene>
    <name type="primary">SMD2</name>
    <name type="ordered locus">YLR275W</name>
    <name type="ORF">L9328.5</name>
</gene>
<comment type="function">
    <text evidence="5">Plays a role in pre-mRNA splicing as a core component of the spliceosomal U1, U2, U4 and U5 small nuclear ribonucleoproteins (snRNPs), the building blocks of the spliceosome.</text>
</comment>
<comment type="subunit">
    <text evidence="3 4 6">Component of the Sm core complex, present in spliceosomal snRNP U1, U2, U4/U6 and U5. The core complex contains SMB1, SMD1, SMD2, SMD3, SME1, SMX3 and SMX2 (Sm proteins B, D1, D2, D3, E, F and G, respectively), and is probably a heptameric ring structure. Belongs to the CWC complex (or CEF1-associated complex), a spliceosome sub-complex reminiscent of a late-stage spliceosome composed of the U2, U5 and U6 snRNAs and at least BUD13, BUD31, BRR2, CDC40, CEF1, CLF1, CUS1, CWC2, CWC15, CWC21, CWC22, CWC23, CWC24, CWC25, CWC27, ECM2, HSH155, IST3, ISY1, LEA1, MSL1, NTC20, PRP8, PRP9, PRP11, PRP19, PRP21, PRP22, PRP45, PRP46, SLU7, SMB1, SMD1, SMD2, SMD3, SMX2, SMX3, SNT309, SNU114, SPP2, SYF1, SYF2, RSE1 and YJU2. Component of the U4/U6-U5 tri-snRNP complex composed of the U4, U6 and U5 snRNAs and at least PRP3, PRP4, PRP6, PRP8, PRP18, PRP31, PRP38, SNU13, SNU23, SNU66, SNU114, SPP381, SMB1, SMD1, SMD2, SMD3, SMX2, SMX3, LSM2, LSM3, LSM4, LSM5, LSM6, LSM7, LSM8, BRR2 and DIB1.</text>
</comment>
<comment type="interaction">
    <interactant intactId="EBI-235">
        <id>Q06217</id>
    </interactant>
    <interactant intactId="EBI-180">
        <id>P38203</id>
        <label>LSM2</label>
    </interactant>
    <organismsDiffer>false</organismsDiffer>
    <experiments>4</experiments>
</comment>
<comment type="interaction">
    <interactant intactId="EBI-235">
        <id>Q06217</id>
    </interactant>
    <interactant intactId="EBI-188">
        <id>P40070</id>
        <label>LSM4</label>
    </interactant>
    <organismsDiffer>false</organismsDiffer>
    <experiments>4</experiments>
</comment>
<comment type="interaction">
    <interactant intactId="EBI-235">
        <id>Q06217</id>
    </interactant>
    <interactant intactId="EBI-770">
        <id>P54999</id>
        <label>SMX3</label>
    </interactant>
    <organismsDiffer>false</organismsDiffer>
    <experiments>3</experiments>
</comment>
<comment type="subcellular location">
    <subcellularLocation>
        <location evidence="1">Nucleus</location>
    </subcellularLocation>
    <subcellularLocation>
        <location evidence="1">Cytoplasm</location>
        <location evidence="1">Cytosol</location>
    </subcellularLocation>
</comment>
<comment type="miscellaneous">
    <text evidence="7">Present with 799 molecules/cell in log phase SD medium.</text>
</comment>
<comment type="similarity">
    <text evidence="8">Belongs to the snRNP core protein family.</text>
</comment>
<proteinExistence type="evidence at protein level"/>